<reference key="1">
    <citation type="journal article" date="2008" name="PLoS Genet.">
        <title>Complete genome sequence of the complex carbohydrate-degrading marine bacterium, Saccharophagus degradans strain 2-40 T.</title>
        <authorList>
            <person name="Weiner R.M."/>
            <person name="Taylor L.E. II"/>
            <person name="Henrissat B."/>
            <person name="Hauser L."/>
            <person name="Land M."/>
            <person name="Coutinho P.M."/>
            <person name="Rancurel C."/>
            <person name="Saunders E.H."/>
            <person name="Longmire A.G."/>
            <person name="Zhang H."/>
            <person name="Bayer E.A."/>
            <person name="Gilbert H.J."/>
            <person name="Larimer F."/>
            <person name="Zhulin I.B."/>
            <person name="Ekborg N.A."/>
            <person name="Lamed R."/>
            <person name="Richardson P.M."/>
            <person name="Borovok I."/>
            <person name="Hutcheson S."/>
        </authorList>
    </citation>
    <scope>NUCLEOTIDE SEQUENCE [LARGE SCALE GENOMIC DNA]</scope>
    <source>
        <strain>2-40 / ATCC 43961 / DSM 17024</strain>
    </source>
</reference>
<evidence type="ECO:0000255" key="1">
    <source>
        <dbReference type="HAMAP-Rule" id="MF_00662"/>
    </source>
</evidence>
<comment type="function">
    <text evidence="1">Catalyzes the formation of phosphatidylethanolamine (PtdEtn) from phosphatidylserine (PtdSer).</text>
</comment>
<comment type="catalytic activity">
    <reaction evidence="1">
        <text>a 1,2-diacyl-sn-glycero-3-phospho-L-serine + H(+) = a 1,2-diacyl-sn-glycero-3-phosphoethanolamine + CO2</text>
        <dbReference type="Rhea" id="RHEA:20828"/>
        <dbReference type="ChEBI" id="CHEBI:15378"/>
        <dbReference type="ChEBI" id="CHEBI:16526"/>
        <dbReference type="ChEBI" id="CHEBI:57262"/>
        <dbReference type="ChEBI" id="CHEBI:64612"/>
        <dbReference type="EC" id="4.1.1.65"/>
    </reaction>
</comment>
<comment type="cofactor">
    <cofactor evidence="1">
        <name>pyruvate</name>
        <dbReference type="ChEBI" id="CHEBI:15361"/>
    </cofactor>
    <text evidence="1">Binds 1 pyruvoyl group covalently per subunit.</text>
</comment>
<comment type="pathway">
    <text evidence="1">Phospholipid metabolism; phosphatidylethanolamine biosynthesis; phosphatidylethanolamine from CDP-diacylglycerol: step 2/2.</text>
</comment>
<comment type="subunit">
    <text evidence="1">Heterodimer of a large membrane-associated beta subunit and a small pyruvoyl-containing alpha subunit.</text>
</comment>
<comment type="subcellular location">
    <subcellularLocation>
        <location evidence="1">Cell membrane</location>
        <topology evidence="1">Peripheral membrane protein</topology>
    </subcellularLocation>
</comment>
<comment type="PTM">
    <text evidence="1">Is synthesized initially as an inactive proenzyme. Formation of the active enzyme involves a self-maturation process in which the active site pyruvoyl group is generated from an internal serine residue via an autocatalytic post-translational modification. Two non-identical subunits are generated from the proenzyme in this reaction, and the pyruvate is formed at the N-terminus of the alpha chain, which is derived from the carboxyl end of the proenzyme. The autoendoproteolytic cleavage occurs by a canonical serine protease mechanism, in which the side chain hydroxyl group of the serine supplies its oxygen atom to form the C-terminus of the beta chain, while the remainder of the serine residue undergoes an oxidative deamination to produce ammonia and the pyruvoyl prosthetic group on the alpha chain. During this reaction, the Ser that is part of the protease active site of the proenzyme becomes the pyruvoyl prosthetic group, which constitutes an essential element of the active site of the mature decarboxylase.</text>
</comment>
<comment type="similarity">
    <text evidence="1">Belongs to the phosphatidylserine decarboxylase family. PSD-B subfamily. Prokaryotic type I sub-subfamily.</text>
</comment>
<sequence>MKDDLFIALQRIIPHHAFSRLVGWFAATKIRWIKHLFITKFINAYNVNMAEALEPNPENYANFNDFFVRALKPDARPIASEANAIVSPADGAVSQLGEISGDKIFQAKNHWFSIKELLACDDELAEQFMGGSFATIYLSPSDYHRVHMPAAGLLTQMNYIPGDLFSVNPVTTENVAGLFARNERIAAIFDTEFGPMAVVMVGAMIVASIETVWDGQITPASREVKRNVYSKPREIKLGKGDEMGRFKLGSTAVLLFPKGAIKWKEDIKAETTLRMGEMIAELQTQA</sequence>
<proteinExistence type="inferred from homology"/>
<accession>Q21H90</accession>
<name>PSD_SACD2</name>
<keyword id="KW-1003">Cell membrane</keyword>
<keyword id="KW-0210">Decarboxylase</keyword>
<keyword id="KW-0444">Lipid biosynthesis</keyword>
<keyword id="KW-0443">Lipid metabolism</keyword>
<keyword id="KW-0456">Lyase</keyword>
<keyword id="KW-0472">Membrane</keyword>
<keyword id="KW-0594">Phospholipid biosynthesis</keyword>
<keyword id="KW-1208">Phospholipid metabolism</keyword>
<keyword id="KW-0670">Pyruvate</keyword>
<keyword id="KW-1185">Reference proteome</keyword>
<keyword id="KW-0865">Zymogen</keyword>
<organism>
    <name type="scientific">Saccharophagus degradans (strain 2-40 / ATCC 43961 / DSM 17024)</name>
    <dbReference type="NCBI Taxonomy" id="203122"/>
    <lineage>
        <taxon>Bacteria</taxon>
        <taxon>Pseudomonadati</taxon>
        <taxon>Pseudomonadota</taxon>
        <taxon>Gammaproteobacteria</taxon>
        <taxon>Cellvibrionales</taxon>
        <taxon>Cellvibrionaceae</taxon>
        <taxon>Saccharophagus</taxon>
    </lineage>
</organism>
<feature type="chain" id="PRO_0000262147" description="Phosphatidylserine decarboxylase beta chain" evidence="1">
    <location>
        <begin position="1"/>
        <end position="249"/>
    </location>
</feature>
<feature type="chain" id="PRO_0000262148" description="Phosphatidylserine decarboxylase alpha chain" evidence="1">
    <location>
        <begin position="250"/>
        <end position="286"/>
    </location>
</feature>
<feature type="active site" description="Charge relay system; for autoendoproteolytic cleavage activity" evidence="1">
    <location>
        <position position="90"/>
    </location>
</feature>
<feature type="active site" description="Charge relay system; for autoendoproteolytic cleavage activity" evidence="1">
    <location>
        <position position="147"/>
    </location>
</feature>
<feature type="active site" description="Charge relay system; for autoendoproteolytic cleavage activity" evidence="1">
    <location>
        <position position="250"/>
    </location>
</feature>
<feature type="active site" description="Schiff-base intermediate with substrate; via pyruvic acid; for decarboxylase activity" evidence="1">
    <location>
        <position position="250"/>
    </location>
</feature>
<feature type="site" description="Cleavage (non-hydrolytic); by autocatalysis" evidence="1">
    <location>
        <begin position="249"/>
        <end position="250"/>
    </location>
</feature>
<feature type="modified residue" description="Pyruvic acid (Ser); by autocatalysis" evidence="1">
    <location>
        <position position="250"/>
    </location>
</feature>
<protein>
    <recommendedName>
        <fullName evidence="1">Phosphatidylserine decarboxylase proenzyme</fullName>
        <ecNumber evidence="1">4.1.1.65</ecNumber>
    </recommendedName>
    <component>
        <recommendedName>
            <fullName evidence="1">Phosphatidylserine decarboxylase alpha chain</fullName>
        </recommendedName>
    </component>
    <component>
        <recommendedName>
            <fullName evidence="1">Phosphatidylserine decarboxylase beta chain</fullName>
        </recommendedName>
    </component>
</protein>
<gene>
    <name evidence="1" type="primary">psd</name>
    <name type="ordered locus">Sde_2679</name>
</gene>
<dbReference type="EC" id="4.1.1.65" evidence="1"/>
<dbReference type="EMBL" id="CP000282">
    <property type="protein sequence ID" value="ABD81939.1"/>
    <property type="molecule type" value="Genomic_DNA"/>
</dbReference>
<dbReference type="RefSeq" id="WP_011469156.1">
    <property type="nucleotide sequence ID" value="NC_007912.1"/>
</dbReference>
<dbReference type="SMR" id="Q21H90"/>
<dbReference type="STRING" id="203122.Sde_2679"/>
<dbReference type="GeneID" id="98614337"/>
<dbReference type="KEGG" id="sde:Sde_2679"/>
<dbReference type="eggNOG" id="COG0688">
    <property type="taxonomic scope" value="Bacteria"/>
</dbReference>
<dbReference type="HOGENOM" id="CLU_029061_4_1_6"/>
<dbReference type="OrthoDB" id="9802030at2"/>
<dbReference type="UniPathway" id="UPA00558">
    <property type="reaction ID" value="UER00616"/>
</dbReference>
<dbReference type="Proteomes" id="UP000001947">
    <property type="component" value="Chromosome"/>
</dbReference>
<dbReference type="GO" id="GO:0005886">
    <property type="term" value="C:plasma membrane"/>
    <property type="evidence" value="ECO:0007669"/>
    <property type="project" value="UniProtKB-SubCell"/>
</dbReference>
<dbReference type="GO" id="GO:0004609">
    <property type="term" value="F:phosphatidylserine decarboxylase activity"/>
    <property type="evidence" value="ECO:0007669"/>
    <property type="project" value="UniProtKB-UniRule"/>
</dbReference>
<dbReference type="GO" id="GO:0006646">
    <property type="term" value="P:phosphatidylethanolamine biosynthetic process"/>
    <property type="evidence" value="ECO:0007669"/>
    <property type="project" value="UniProtKB-UniRule"/>
</dbReference>
<dbReference type="HAMAP" id="MF_00662">
    <property type="entry name" value="PS_decarb_PSD_B_type1"/>
    <property type="match status" value="1"/>
</dbReference>
<dbReference type="InterPro" id="IPR003817">
    <property type="entry name" value="PS_Dcarbxylase"/>
</dbReference>
<dbReference type="InterPro" id="IPR033177">
    <property type="entry name" value="PSD-B"/>
</dbReference>
<dbReference type="InterPro" id="IPR033178">
    <property type="entry name" value="PSD_type1_pro"/>
</dbReference>
<dbReference type="NCBIfam" id="TIGR00163">
    <property type="entry name" value="PS_decarb"/>
    <property type="match status" value="1"/>
</dbReference>
<dbReference type="PANTHER" id="PTHR10067">
    <property type="entry name" value="PHOSPHATIDYLSERINE DECARBOXYLASE"/>
    <property type="match status" value="1"/>
</dbReference>
<dbReference type="PANTHER" id="PTHR10067:SF6">
    <property type="entry name" value="PHOSPHATIDYLSERINE DECARBOXYLASE PROENZYME, MITOCHONDRIAL"/>
    <property type="match status" value="1"/>
</dbReference>
<dbReference type="Pfam" id="PF02666">
    <property type="entry name" value="PS_Dcarbxylase"/>
    <property type="match status" value="1"/>
</dbReference>